<proteinExistence type="inferred from homology"/>
<sequence>MRLLEERIKKDGQVLGEDVLKVDNFLNHQVDPELMAAMGEEFKRLFEGAPITKILTVESSGIAPAVFSGLAFHVPVVFARKHKSLTLQDNMYSATVYSYTKKVNNHISISKKFLNENDRVLVIDDFLANGQAVEGLLEIIDQAGAQLEGVGIVIEKTFQKGRELLDQRGIHVESLARIAAFEQGEVVFLDENNEN</sequence>
<dbReference type="EC" id="2.4.2.22" evidence="1"/>
<dbReference type="EMBL" id="CR936503">
    <property type="protein sequence ID" value="CAI55864.1"/>
    <property type="molecule type" value="Genomic_DNA"/>
</dbReference>
<dbReference type="RefSeq" id="WP_011375252.1">
    <property type="nucleotide sequence ID" value="NC_007576.1"/>
</dbReference>
<dbReference type="SMR" id="Q38VB9"/>
<dbReference type="STRING" id="314315.LCA_1557"/>
<dbReference type="KEGG" id="lsa:LCA_1557"/>
<dbReference type="eggNOG" id="COG0503">
    <property type="taxonomic scope" value="Bacteria"/>
</dbReference>
<dbReference type="HOGENOM" id="CLU_099015_0_0_9"/>
<dbReference type="OrthoDB" id="9790678at2"/>
<dbReference type="UniPathway" id="UPA00602">
    <property type="reaction ID" value="UER00658"/>
</dbReference>
<dbReference type="Proteomes" id="UP000002707">
    <property type="component" value="Chromosome"/>
</dbReference>
<dbReference type="GO" id="GO:0005737">
    <property type="term" value="C:cytoplasm"/>
    <property type="evidence" value="ECO:0007669"/>
    <property type="project" value="UniProtKB-SubCell"/>
</dbReference>
<dbReference type="GO" id="GO:0000310">
    <property type="term" value="F:xanthine phosphoribosyltransferase activity"/>
    <property type="evidence" value="ECO:0007669"/>
    <property type="project" value="UniProtKB-UniRule"/>
</dbReference>
<dbReference type="GO" id="GO:0006166">
    <property type="term" value="P:purine ribonucleoside salvage"/>
    <property type="evidence" value="ECO:0007669"/>
    <property type="project" value="UniProtKB-KW"/>
</dbReference>
<dbReference type="GO" id="GO:0046110">
    <property type="term" value="P:xanthine metabolic process"/>
    <property type="evidence" value="ECO:0007669"/>
    <property type="project" value="InterPro"/>
</dbReference>
<dbReference type="GO" id="GO:0032265">
    <property type="term" value="P:XMP salvage"/>
    <property type="evidence" value="ECO:0007669"/>
    <property type="project" value="UniProtKB-UniRule"/>
</dbReference>
<dbReference type="CDD" id="cd06223">
    <property type="entry name" value="PRTases_typeI"/>
    <property type="match status" value="1"/>
</dbReference>
<dbReference type="Gene3D" id="3.40.50.2020">
    <property type="match status" value="1"/>
</dbReference>
<dbReference type="HAMAP" id="MF_01184">
    <property type="entry name" value="XPRTase"/>
    <property type="match status" value="1"/>
</dbReference>
<dbReference type="InterPro" id="IPR000836">
    <property type="entry name" value="PRibTrfase_dom"/>
</dbReference>
<dbReference type="InterPro" id="IPR029057">
    <property type="entry name" value="PRTase-like"/>
</dbReference>
<dbReference type="InterPro" id="IPR050118">
    <property type="entry name" value="Pur/Pyrimidine_PRTase"/>
</dbReference>
<dbReference type="InterPro" id="IPR010079">
    <property type="entry name" value="Xanthine_PRibTrfase"/>
</dbReference>
<dbReference type="NCBIfam" id="NF006671">
    <property type="entry name" value="PRK09219.1"/>
    <property type="match status" value="1"/>
</dbReference>
<dbReference type="NCBIfam" id="TIGR01744">
    <property type="entry name" value="XPRTase"/>
    <property type="match status" value="1"/>
</dbReference>
<dbReference type="PANTHER" id="PTHR43864">
    <property type="entry name" value="HYPOXANTHINE/GUANINE PHOSPHORIBOSYLTRANSFERASE"/>
    <property type="match status" value="1"/>
</dbReference>
<dbReference type="PANTHER" id="PTHR43864:SF1">
    <property type="entry name" value="XANTHINE PHOSPHORIBOSYLTRANSFERASE"/>
    <property type="match status" value="1"/>
</dbReference>
<dbReference type="SUPFAM" id="SSF53271">
    <property type="entry name" value="PRTase-like"/>
    <property type="match status" value="1"/>
</dbReference>
<keyword id="KW-0963">Cytoplasm</keyword>
<keyword id="KW-0328">Glycosyltransferase</keyword>
<keyword id="KW-0660">Purine salvage</keyword>
<keyword id="KW-1185">Reference proteome</keyword>
<keyword id="KW-0808">Transferase</keyword>
<accession>Q38VB9</accession>
<reference key="1">
    <citation type="journal article" date="2005" name="Nat. Biotechnol.">
        <title>The complete genome sequence of the meat-borne lactic acid bacterium Lactobacillus sakei 23K.</title>
        <authorList>
            <person name="Chaillou S."/>
            <person name="Champomier-Verges M.-C."/>
            <person name="Cornet M."/>
            <person name="Crutz-Le Coq A.-M."/>
            <person name="Dudez A.-M."/>
            <person name="Martin V."/>
            <person name="Beaufils S."/>
            <person name="Darbon-Rongere E."/>
            <person name="Bossy R."/>
            <person name="Loux V."/>
            <person name="Zagorec M."/>
        </authorList>
    </citation>
    <scope>NUCLEOTIDE SEQUENCE [LARGE SCALE GENOMIC DNA]</scope>
    <source>
        <strain>23K</strain>
    </source>
</reference>
<feature type="chain" id="PRO_0000339711" description="Xanthine phosphoribosyltransferase">
    <location>
        <begin position="1"/>
        <end position="195"/>
    </location>
</feature>
<feature type="binding site" evidence="1">
    <location>
        <position position="20"/>
    </location>
    <ligand>
        <name>xanthine</name>
        <dbReference type="ChEBI" id="CHEBI:17712"/>
    </ligand>
</feature>
<feature type="binding site" evidence="1">
    <location>
        <position position="27"/>
    </location>
    <ligand>
        <name>xanthine</name>
        <dbReference type="ChEBI" id="CHEBI:17712"/>
    </ligand>
</feature>
<feature type="binding site" evidence="1">
    <location>
        <begin position="128"/>
        <end position="132"/>
    </location>
    <ligand>
        <name>5-phospho-alpha-D-ribose 1-diphosphate</name>
        <dbReference type="ChEBI" id="CHEBI:58017"/>
    </ligand>
</feature>
<feature type="binding site" evidence="1">
    <location>
        <position position="156"/>
    </location>
    <ligand>
        <name>xanthine</name>
        <dbReference type="ChEBI" id="CHEBI:17712"/>
    </ligand>
</feature>
<protein>
    <recommendedName>
        <fullName evidence="1">Xanthine phosphoribosyltransferase</fullName>
        <shortName evidence="1">XPRTase</shortName>
        <ecNumber evidence="1">2.4.2.22</ecNumber>
    </recommendedName>
</protein>
<evidence type="ECO:0000255" key="1">
    <source>
        <dbReference type="HAMAP-Rule" id="MF_01184"/>
    </source>
</evidence>
<gene>
    <name evidence="1" type="primary">xpt</name>
    <name type="ordered locus">LCA_1557</name>
</gene>
<comment type="function">
    <text evidence="1">Converts the preformed base xanthine, a product of nucleic acid breakdown, to xanthosine 5'-monophosphate (XMP), so it can be reused for RNA or DNA synthesis.</text>
</comment>
<comment type="catalytic activity">
    <reaction evidence="1">
        <text>XMP + diphosphate = xanthine + 5-phospho-alpha-D-ribose 1-diphosphate</text>
        <dbReference type="Rhea" id="RHEA:10800"/>
        <dbReference type="ChEBI" id="CHEBI:17712"/>
        <dbReference type="ChEBI" id="CHEBI:33019"/>
        <dbReference type="ChEBI" id="CHEBI:57464"/>
        <dbReference type="ChEBI" id="CHEBI:58017"/>
        <dbReference type="EC" id="2.4.2.22"/>
    </reaction>
</comment>
<comment type="pathway">
    <text evidence="1">Purine metabolism; XMP biosynthesis via salvage pathway; XMP from xanthine: step 1/1.</text>
</comment>
<comment type="subunit">
    <text evidence="1">Homodimer.</text>
</comment>
<comment type="subcellular location">
    <subcellularLocation>
        <location evidence="1">Cytoplasm</location>
    </subcellularLocation>
</comment>
<comment type="similarity">
    <text evidence="1">Belongs to the purine/pyrimidine phosphoribosyltransferase family. Xpt subfamily.</text>
</comment>
<organism>
    <name type="scientific">Latilactobacillus sakei subsp. sakei (strain 23K)</name>
    <name type="common">Lactobacillus sakei subsp. sakei</name>
    <dbReference type="NCBI Taxonomy" id="314315"/>
    <lineage>
        <taxon>Bacteria</taxon>
        <taxon>Bacillati</taxon>
        <taxon>Bacillota</taxon>
        <taxon>Bacilli</taxon>
        <taxon>Lactobacillales</taxon>
        <taxon>Lactobacillaceae</taxon>
        <taxon>Latilactobacillus</taxon>
    </lineage>
</organism>
<name>XPT_LATSS</name>